<proteinExistence type="evidence at protein level"/>
<gene>
    <name type="primary">TMIE</name>
</gene>
<dbReference type="EMBL" id="AY081842">
    <property type="protein sequence ID" value="AAL89820.1"/>
    <property type="molecule type" value="mRNA"/>
</dbReference>
<dbReference type="EMBL" id="AK289625">
    <property type="protein sequence ID" value="BAF82314.1"/>
    <property type="molecule type" value="mRNA"/>
</dbReference>
<dbReference type="EMBL" id="CH471055">
    <property type="protein sequence ID" value="EAW64781.1"/>
    <property type="molecule type" value="Genomic_DNA"/>
</dbReference>
<dbReference type="EMBL" id="BC126258">
    <property type="protein sequence ID" value="AAI26259.1"/>
    <property type="molecule type" value="mRNA"/>
</dbReference>
<dbReference type="EMBL" id="BC126260">
    <property type="protein sequence ID" value="AAI26261.1"/>
    <property type="molecule type" value="mRNA"/>
</dbReference>
<dbReference type="CCDS" id="CCDS43081.1"/>
<dbReference type="RefSeq" id="NP_671729.2">
    <property type="nucleotide sequence ID" value="NM_147196.3"/>
</dbReference>
<dbReference type="SMR" id="Q8NEW7"/>
<dbReference type="BioGRID" id="129230">
    <property type="interactions" value="31"/>
</dbReference>
<dbReference type="FunCoup" id="Q8NEW7">
    <property type="interactions" value="12"/>
</dbReference>
<dbReference type="IntAct" id="Q8NEW7">
    <property type="interactions" value="3"/>
</dbReference>
<dbReference type="STRING" id="9606.ENSP00000494576"/>
<dbReference type="TCDB" id="1.A.9.1.22">
    <property type="family name" value="the neurotransmitter receptor, cys loop, ligand-gated ion channel (lic) family"/>
</dbReference>
<dbReference type="TCDB" id="8.A.116.1.2">
    <property type="family name" value="the transmembrane inner ear (tmie) family"/>
</dbReference>
<dbReference type="GlyGen" id="Q8NEW7">
    <property type="glycosylation" value="1 site, 1 O-linked glycan (1 site)"/>
</dbReference>
<dbReference type="iPTMnet" id="Q8NEW7"/>
<dbReference type="PhosphoSitePlus" id="Q8NEW7"/>
<dbReference type="BioMuta" id="TMIE"/>
<dbReference type="DMDM" id="212276469"/>
<dbReference type="jPOST" id="Q8NEW7"/>
<dbReference type="PaxDb" id="9606-ENSP00000324775"/>
<dbReference type="PeptideAtlas" id="Q8NEW7"/>
<dbReference type="Antibodypedia" id="29762">
    <property type="antibodies" value="72 antibodies from 18 providers"/>
</dbReference>
<dbReference type="DNASU" id="259236"/>
<dbReference type="Ensembl" id="ENST00000643606.3">
    <property type="protein sequence ID" value="ENSP00000494576.2"/>
    <property type="gene ID" value="ENSG00000181585.7"/>
</dbReference>
<dbReference type="GeneID" id="259236"/>
<dbReference type="KEGG" id="hsa:259236"/>
<dbReference type="MANE-Select" id="ENST00000643606.3">
    <property type="protein sequence ID" value="ENSP00000494576.2"/>
    <property type="RefSeq nucleotide sequence ID" value="NM_147196.3"/>
    <property type="RefSeq protein sequence ID" value="NP_671729.2"/>
</dbReference>
<dbReference type="UCSC" id="uc010hjk.2">
    <property type="organism name" value="human"/>
</dbReference>
<dbReference type="AGR" id="HGNC:30800"/>
<dbReference type="CTD" id="259236"/>
<dbReference type="DisGeNET" id="259236"/>
<dbReference type="GeneCards" id="TMIE"/>
<dbReference type="GeneReviews" id="TMIE"/>
<dbReference type="HGNC" id="HGNC:30800">
    <property type="gene designation" value="TMIE"/>
</dbReference>
<dbReference type="HPA" id="ENSG00000181585">
    <property type="expression patterns" value="Tissue enhanced (brain, pituitary gland)"/>
</dbReference>
<dbReference type="MalaCards" id="TMIE"/>
<dbReference type="MIM" id="600971">
    <property type="type" value="phenotype"/>
</dbReference>
<dbReference type="MIM" id="607237">
    <property type="type" value="gene"/>
</dbReference>
<dbReference type="neXtProt" id="NX_Q8NEW7"/>
<dbReference type="OpenTargets" id="ENSG00000181585"/>
<dbReference type="Orphanet" id="90636">
    <property type="disease" value="Rare autosomal recessive non-syndromic sensorineural deafness type DFNB"/>
</dbReference>
<dbReference type="PharmGKB" id="PA134972473"/>
<dbReference type="VEuPathDB" id="HostDB:ENSG00000181585"/>
<dbReference type="eggNOG" id="ENOG502RY3K">
    <property type="taxonomic scope" value="Eukaryota"/>
</dbReference>
<dbReference type="GeneTree" id="ENSGT00390000005082"/>
<dbReference type="HOGENOM" id="CLU_106776_1_0_1"/>
<dbReference type="InParanoid" id="Q8NEW7"/>
<dbReference type="OMA" id="CCIFNCR"/>
<dbReference type="OrthoDB" id="6154284at2759"/>
<dbReference type="PAN-GO" id="Q8NEW7">
    <property type="GO annotations" value="2 GO annotations based on evolutionary models"/>
</dbReference>
<dbReference type="PhylomeDB" id="Q8NEW7"/>
<dbReference type="TreeFam" id="TF332314"/>
<dbReference type="PathwayCommons" id="Q8NEW7"/>
<dbReference type="Reactome" id="R-HSA-9662360">
    <property type="pathway name" value="Sensory processing of sound by inner hair cells of the cochlea"/>
</dbReference>
<dbReference type="Reactome" id="R-HSA-9662361">
    <property type="pathway name" value="Sensory processing of sound by outer hair cells of the cochlea"/>
</dbReference>
<dbReference type="BioGRID-ORCS" id="259236">
    <property type="hits" value="11 hits in 1142 CRISPR screens"/>
</dbReference>
<dbReference type="GenomeRNAi" id="259236"/>
<dbReference type="Pharos" id="Q8NEW7">
    <property type="development level" value="Tbio"/>
</dbReference>
<dbReference type="PRO" id="PR:Q8NEW7"/>
<dbReference type="Proteomes" id="UP000005640">
    <property type="component" value="Chromosome 3"/>
</dbReference>
<dbReference type="RNAct" id="Q8NEW7">
    <property type="molecule type" value="protein"/>
</dbReference>
<dbReference type="Bgee" id="ENSG00000181585">
    <property type="expression patterns" value="Expressed in primordial germ cell in gonad and 124 other cell types or tissues"/>
</dbReference>
<dbReference type="ExpressionAtlas" id="Q8NEW7">
    <property type="expression patterns" value="baseline and differential"/>
</dbReference>
<dbReference type="GO" id="GO:0016020">
    <property type="term" value="C:membrane"/>
    <property type="evidence" value="ECO:0007669"/>
    <property type="project" value="UniProtKB-SubCell"/>
</dbReference>
<dbReference type="GO" id="GO:0042472">
    <property type="term" value="P:inner ear morphogenesis"/>
    <property type="evidence" value="ECO:0000318"/>
    <property type="project" value="GO_Central"/>
</dbReference>
<dbReference type="GO" id="GO:0007605">
    <property type="term" value="P:sensory perception of sound"/>
    <property type="evidence" value="ECO:0000318"/>
    <property type="project" value="GO_Central"/>
</dbReference>
<dbReference type="InterPro" id="IPR032006">
    <property type="entry name" value="TMIE"/>
</dbReference>
<dbReference type="PANTHER" id="PTHR28635">
    <property type="entry name" value="TRANSMEMBRANE INNER EAR EXPRESSED PROTEIN"/>
    <property type="match status" value="1"/>
</dbReference>
<dbReference type="PANTHER" id="PTHR28635:SF1">
    <property type="entry name" value="TRANSMEMBRANE INNER EAR EXPRESSED PROTEIN"/>
    <property type="match status" value="1"/>
</dbReference>
<dbReference type="Pfam" id="PF16038">
    <property type="entry name" value="TMIE"/>
    <property type="match status" value="1"/>
</dbReference>
<reference key="1">
    <citation type="journal article" date="2002" name="Am. J. Hum. Genet.">
        <title>Mutations in a novel gene, TMIE, are associated with hearing loss linked to the DFNB6 locus.</title>
        <authorList>
            <person name="Naz S."/>
            <person name="Giguere C.M."/>
            <person name="Kohrman D.C."/>
            <person name="Mitchem K.L."/>
            <person name="Riazuddin S."/>
            <person name="Morell R.J."/>
            <person name="Ramesh A."/>
            <person name="Srisailpathy S."/>
            <person name="Deshmukh D."/>
            <person name="Riazuddin S."/>
            <person name="Griffith A.J."/>
            <person name="Friedman T.B."/>
            <person name="Smith R.J.H."/>
            <person name="Wilcox E.R."/>
        </authorList>
    </citation>
    <scope>NUCLEOTIDE SEQUENCE [MRNA]</scope>
    <scope>TISSUE SPECIFICITY</scope>
    <scope>VARIANTS DFNB6 CYS-81; TRP-84 AND TRP-92</scope>
</reference>
<reference key="2">
    <citation type="journal article" date="2004" name="Nat. Genet.">
        <title>Complete sequencing and characterization of 21,243 full-length human cDNAs.</title>
        <authorList>
            <person name="Ota T."/>
            <person name="Suzuki Y."/>
            <person name="Nishikawa T."/>
            <person name="Otsuki T."/>
            <person name="Sugiyama T."/>
            <person name="Irie R."/>
            <person name="Wakamatsu A."/>
            <person name="Hayashi K."/>
            <person name="Sato H."/>
            <person name="Nagai K."/>
            <person name="Kimura K."/>
            <person name="Makita H."/>
            <person name="Sekine M."/>
            <person name="Obayashi M."/>
            <person name="Nishi T."/>
            <person name="Shibahara T."/>
            <person name="Tanaka T."/>
            <person name="Ishii S."/>
            <person name="Yamamoto J."/>
            <person name="Saito K."/>
            <person name="Kawai Y."/>
            <person name="Isono Y."/>
            <person name="Nakamura Y."/>
            <person name="Nagahari K."/>
            <person name="Murakami K."/>
            <person name="Yasuda T."/>
            <person name="Iwayanagi T."/>
            <person name="Wagatsuma M."/>
            <person name="Shiratori A."/>
            <person name="Sudo H."/>
            <person name="Hosoiri T."/>
            <person name="Kaku Y."/>
            <person name="Kodaira H."/>
            <person name="Kondo H."/>
            <person name="Sugawara M."/>
            <person name="Takahashi M."/>
            <person name="Kanda K."/>
            <person name="Yokoi T."/>
            <person name="Furuya T."/>
            <person name="Kikkawa E."/>
            <person name="Omura Y."/>
            <person name="Abe K."/>
            <person name="Kamihara K."/>
            <person name="Katsuta N."/>
            <person name="Sato K."/>
            <person name="Tanikawa M."/>
            <person name="Yamazaki M."/>
            <person name="Ninomiya K."/>
            <person name="Ishibashi T."/>
            <person name="Yamashita H."/>
            <person name="Murakawa K."/>
            <person name="Fujimori K."/>
            <person name="Tanai H."/>
            <person name="Kimata M."/>
            <person name="Watanabe M."/>
            <person name="Hiraoka S."/>
            <person name="Chiba Y."/>
            <person name="Ishida S."/>
            <person name="Ono Y."/>
            <person name="Takiguchi S."/>
            <person name="Watanabe S."/>
            <person name="Yosida M."/>
            <person name="Hotuta T."/>
            <person name="Kusano J."/>
            <person name="Kanehori K."/>
            <person name="Takahashi-Fujii A."/>
            <person name="Hara H."/>
            <person name="Tanase T.-O."/>
            <person name="Nomura Y."/>
            <person name="Togiya S."/>
            <person name="Komai F."/>
            <person name="Hara R."/>
            <person name="Takeuchi K."/>
            <person name="Arita M."/>
            <person name="Imose N."/>
            <person name="Musashino K."/>
            <person name="Yuuki H."/>
            <person name="Oshima A."/>
            <person name="Sasaki N."/>
            <person name="Aotsuka S."/>
            <person name="Yoshikawa Y."/>
            <person name="Matsunawa H."/>
            <person name="Ichihara T."/>
            <person name="Shiohata N."/>
            <person name="Sano S."/>
            <person name="Moriya S."/>
            <person name="Momiyama H."/>
            <person name="Satoh N."/>
            <person name="Takami S."/>
            <person name="Terashima Y."/>
            <person name="Suzuki O."/>
            <person name="Nakagawa S."/>
            <person name="Senoh A."/>
            <person name="Mizoguchi H."/>
            <person name="Goto Y."/>
            <person name="Shimizu F."/>
            <person name="Wakebe H."/>
            <person name="Hishigaki H."/>
            <person name="Watanabe T."/>
            <person name="Sugiyama A."/>
            <person name="Takemoto M."/>
            <person name="Kawakami B."/>
            <person name="Yamazaki M."/>
            <person name="Watanabe K."/>
            <person name="Kumagai A."/>
            <person name="Itakura S."/>
            <person name="Fukuzumi Y."/>
            <person name="Fujimori Y."/>
            <person name="Komiyama M."/>
            <person name="Tashiro H."/>
            <person name="Tanigami A."/>
            <person name="Fujiwara T."/>
            <person name="Ono T."/>
            <person name="Yamada K."/>
            <person name="Fujii Y."/>
            <person name="Ozaki K."/>
            <person name="Hirao M."/>
            <person name="Ohmori Y."/>
            <person name="Kawabata A."/>
            <person name="Hikiji T."/>
            <person name="Kobatake N."/>
            <person name="Inagaki H."/>
            <person name="Ikema Y."/>
            <person name="Okamoto S."/>
            <person name="Okitani R."/>
            <person name="Kawakami T."/>
            <person name="Noguchi S."/>
            <person name="Itoh T."/>
            <person name="Shigeta K."/>
            <person name="Senba T."/>
            <person name="Matsumura K."/>
            <person name="Nakajima Y."/>
            <person name="Mizuno T."/>
            <person name="Morinaga M."/>
            <person name="Sasaki M."/>
            <person name="Togashi T."/>
            <person name="Oyama M."/>
            <person name="Hata H."/>
            <person name="Watanabe M."/>
            <person name="Komatsu T."/>
            <person name="Mizushima-Sugano J."/>
            <person name="Satoh T."/>
            <person name="Shirai Y."/>
            <person name="Takahashi Y."/>
            <person name="Nakagawa K."/>
            <person name="Okumura K."/>
            <person name="Nagase T."/>
            <person name="Nomura N."/>
            <person name="Kikuchi H."/>
            <person name="Masuho Y."/>
            <person name="Yamashita R."/>
            <person name="Nakai K."/>
            <person name="Yada T."/>
            <person name="Nakamura Y."/>
            <person name="Ohara O."/>
            <person name="Isogai T."/>
            <person name="Sugano S."/>
        </authorList>
    </citation>
    <scope>NUCLEOTIDE SEQUENCE [LARGE SCALE MRNA]</scope>
    <source>
        <tissue>Amygdala</tissue>
    </source>
</reference>
<reference key="3">
    <citation type="submission" date="2005-07" db="EMBL/GenBank/DDBJ databases">
        <authorList>
            <person name="Mural R.J."/>
            <person name="Istrail S."/>
            <person name="Sutton G.G."/>
            <person name="Florea L."/>
            <person name="Halpern A.L."/>
            <person name="Mobarry C.M."/>
            <person name="Lippert R."/>
            <person name="Walenz B."/>
            <person name="Shatkay H."/>
            <person name="Dew I."/>
            <person name="Miller J.R."/>
            <person name="Flanigan M.J."/>
            <person name="Edwards N.J."/>
            <person name="Bolanos R."/>
            <person name="Fasulo D."/>
            <person name="Halldorsson B.V."/>
            <person name="Hannenhalli S."/>
            <person name="Turner R."/>
            <person name="Yooseph S."/>
            <person name="Lu F."/>
            <person name="Nusskern D.R."/>
            <person name="Shue B.C."/>
            <person name="Zheng X.H."/>
            <person name="Zhong F."/>
            <person name="Delcher A.L."/>
            <person name="Huson D.H."/>
            <person name="Kravitz S.A."/>
            <person name="Mouchard L."/>
            <person name="Reinert K."/>
            <person name="Remington K.A."/>
            <person name="Clark A.G."/>
            <person name="Waterman M.S."/>
            <person name="Eichler E.E."/>
            <person name="Adams M.D."/>
            <person name="Hunkapiller M.W."/>
            <person name="Myers E.W."/>
            <person name="Venter J.C."/>
        </authorList>
    </citation>
    <scope>NUCLEOTIDE SEQUENCE [LARGE SCALE GENOMIC DNA]</scope>
</reference>
<reference key="4">
    <citation type="journal article" date="2004" name="Genome Res.">
        <title>The status, quality, and expansion of the NIH full-length cDNA project: the Mammalian Gene Collection (MGC).</title>
        <authorList>
            <consortium name="The MGC Project Team"/>
        </authorList>
    </citation>
    <scope>NUCLEOTIDE SEQUENCE [LARGE SCALE MRNA]</scope>
</reference>
<comment type="function">
    <text evidence="1">Auxiliary subunit of the mechanotransducer (MET) non-specific cation channel complex located at the tips of stereocilia of cochlear hair cells and that mediates sensory transduction in the auditory system. The MET complex is composed of two dimeric pore-forming ion-conducting transmembrane TMC (TMC1 or TMC2) subunits, and aided by several auxiliary proteins including LHFPL5, TMIE, CIB2/3 and TOMT, and the tip-link PCDH15. May contribute to the formation of the pore.</text>
</comment>
<comment type="subunit">
    <text evidence="1">Forms the MET channel composed of TMC (TMC1 or TMC2), TMIE, TOMT, CIB (CIB2 or CIB3), LHPL5 and PCDH15.</text>
</comment>
<comment type="subcellular location">
    <subcellularLocation>
        <location evidence="5">Membrane</location>
        <topology evidence="5">Single-pass type I membrane protein</topology>
    </subcellularLocation>
</comment>
<comment type="tissue specificity">
    <text evidence="4">Expressed in many tissues.</text>
</comment>
<comment type="disease" evidence="4">
    <disease id="DI-00857">
        <name>Deafness, autosomal recessive, 6</name>
        <acronym>DFNB6</acronym>
        <description>A form of non-syndromic sensorineural hearing loss. Sensorineural deafness results from damage to the neural receptors of the inner ear, the nerve pathways to the brain, or the area of the brain that receives sound information.</description>
        <dbReference type="MIM" id="600971"/>
    </disease>
    <text>The disease is caused by variants affecting the gene represented in this entry.</text>
</comment>
<accession>Q8NEW7</accession>
<accession>A0AV93</accession>
<accession>A8K0R0</accession>
<evidence type="ECO:0000250" key="1">
    <source>
        <dbReference type="UniProtKB" id="Q8K467"/>
    </source>
</evidence>
<evidence type="ECO:0000255" key="2"/>
<evidence type="ECO:0000256" key="3">
    <source>
        <dbReference type="SAM" id="MobiDB-lite"/>
    </source>
</evidence>
<evidence type="ECO:0000269" key="4">
    <source>
    </source>
</evidence>
<evidence type="ECO:0000305" key="5"/>
<feature type="signal peptide" evidence="2">
    <location>
        <begin position="1"/>
        <end position="27"/>
    </location>
</feature>
<feature type="chain" id="PRO_0000022555" description="Transmembrane inner ear expressed protein">
    <location>
        <begin position="28"/>
        <end position="156"/>
    </location>
</feature>
<feature type="topological domain" description="Extracellular" evidence="2">
    <location>
        <begin position="28"/>
        <end position="57"/>
    </location>
</feature>
<feature type="transmembrane region" description="Helical" evidence="2">
    <location>
        <begin position="58"/>
        <end position="78"/>
    </location>
</feature>
<feature type="topological domain" description="Cytoplasmic" evidence="2">
    <location>
        <begin position="79"/>
        <end position="156"/>
    </location>
</feature>
<feature type="region of interest" description="Disordered" evidence="3">
    <location>
        <begin position="113"/>
        <end position="135"/>
    </location>
</feature>
<feature type="sequence variant" id="VAR_021524" description="In DFNB6; dbSNP:rs28942096." evidence="4">
    <original>R</original>
    <variation>C</variation>
    <location>
        <position position="81"/>
    </location>
</feature>
<feature type="sequence variant" id="VAR_021525" description="In DFNB6; dbSNP:rs28942097." evidence="4">
    <original>R</original>
    <variation>W</variation>
    <location>
        <position position="84"/>
    </location>
</feature>
<feature type="sequence variant" id="VAR_021526" description="In DFNB6; dbSNP:rs28941781." evidence="4">
    <original>R</original>
    <variation>W</variation>
    <location>
        <position position="92"/>
    </location>
</feature>
<feature type="sequence conflict" description="In Ref. 1; AAL89820 and 4; AAI26259/AAI26261." evidence="5" ref="1 4">
    <location>
        <position position="131"/>
    </location>
</feature>
<sequence length="156" mass="17241">MAGWPGAGPLCVLGGAALGVCLAGVAGQLVEPSTAPPKPKPPPLTKETVVFWDMRLWHVVGIFSLFVLSIIITLCCVFNCRVPRTRKEIEARYLQRKAAKMYTDKLETVPPLNELTEVPGEDKKKKKKKKKDSVDTVAIKVEEDEKNEAKKKKGEK</sequence>
<name>TMIE_HUMAN</name>
<protein>
    <recommendedName>
        <fullName>Transmembrane inner ear expressed protein</fullName>
    </recommendedName>
</protein>
<keyword id="KW-0209">Deafness</keyword>
<keyword id="KW-0225">Disease variant</keyword>
<keyword id="KW-0472">Membrane</keyword>
<keyword id="KW-1010">Non-syndromic deafness</keyword>
<keyword id="KW-1185">Reference proteome</keyword>
<keyword id="KW-0732">Signal</keyword>
<keyword id="KW-0812">Transmembrane</keyword>
<keyword id="KW-1133">Transmembrane helix</keyword>
<organism>
    <name type="scientific">Homo sapiens</name>
    <name type="common">Human</name>
    <dbReference type="NCBI Taxonomy" id="9606"/>
    <lineage>
        <taxon>Eukaryota</taxon>
        <taxon>Metazoa</taxon>
        <taxon>Chordata</taxon>
        <taxon>Craniata</taxon>
        <taxon>Vertebrata</taxon>
        <taxon>Euteleostomi</taxon>
        <taxon>Mammalia</taxon>
        <taxon>Eutheria</taxon>
        <taxon>Euarchontoglires</taxon>
        <taxon>Primates</taxon>
        <taxon>Haplorrhini</taxon>
        <taxon>Catarrhini</taxon>
        <taxon>Hominidae</taxon>
        <taxon>Homo</taxon>
    </lineage>
</organism>